<comment type="function">
    <text evidence="1">Allows the formation of correctly charged Gln-tRNA(Gln) through the transamidation of misacylated Glu-tRNA(Gln) in organisms which lack glutaminyl-tRNA synthetase. The reaction takes place in the presence of glutamine and ATP through an activated gamma-phospho-Glu-tRNA(Gln).</text>
</comment>
<comment type="catalytic activity">
    <reaction evidence="1">
        <text>L-glutamyl-tRNA(Gln) + L-glutamine + ATP + H2O = L-glutaminyl-tRNA(Gln) + L-glutamate + ADP + phosphate + H(+)</text>
        <dbReference type="Rhea" id="RHEA:17521"/>
        <dbReference type="Rhea" id="RHEA-COMP:9681"/>
        <dbReference type="Rhea" id="RHEA-COMP:9684"/>
        <dbReference type="ChEBI" id="CHEBI:15377"/>
        <dbReference type="ChEBI" id="CHEBI:15378"/>
        <dbReference type="ChEBI" id="CHEBI:29985"/>
        <dbReference type="ChEBI" id="CHEBI:30616"/>
        <dbReference type="ChEBI" id="CHEBI:43474"/>
        <dbReference type="ChEBI" id="CHEBI:58359"/>
        <dbReference type="ChEBI" id="CHEBI:78520"/>
        <dbReference type="ChEBI" id="CHEBI:78521"/>
        <dbReference type="ChEBI" id="CHEBI:456216"/>
        <dbReference type="EC" id="6.3.5.7"/>
    </reaction>
</comment>
<comment type="subunit">
    <text evidence="1">Heterotrimer of A, B and C subunits.</text>
</comment>
<comment type="similarity">
    <text evidence="1">Belongs to the amidase family. GatA subfamily.</text>
</comment>
<gene>
    <name evidence="1" type="primary">gatA</name>
    <name type="ordered locus">Synpcc7942_2117</name>
</gene>
<sequence>MASIRELHSQLVRKERSAVEIAEAALQRIETLEPQLKSFLHVTADQAIAQAKAVDQRIAAGEEISLLAGIPIGIKDNLCTRGIPTTCASKILQGFVPPYESTVTQRLAEAGAVAVGKTNLDEFAMGSSTENSAYQTTANPWDLTRVPGGSSGGSAAAVAADECVVALGSDTGGSIRQPAAFCGVVGLKPTYGLVSRYGLVAYASSLDQIGPFSRSVEDTAILLGAIAGHDPKDATSLKVEVPDYTQFLKPSLAGIKVGVITETVTDSPAGQAMQAALEVLQGLGAEIREISCPRFAYGLPAYYIIAPSEASANLARYDGVKYGYRVEEAETLIDMYCRTRAEGFGSEVKRRIMIGTYALSAGYYDAYYLKAQKVRTLIKQDFEAAFAEVDVLVSPTTPTTAFKAGEKTADPLSMYLSDLMTIPVNLAGLPGLSLPCGFDEAGLPYGLQIIGNVLREDQVLHTAYAYEQATEWHLRQPAL</sequence>
<keyword id="KW-0067">ATP-binding</keyword>
<keyword id="KW-0436">Ligase</keyword>
<keyword id="KW-0547">Nucleotide-binding</keyword>
<keyword id="KW-0648">Protein biosynthesis</keyword>
<keyword id="KW-1185">Reference proteome</keyword>
<protein>
    <recommendedName>
        <fullName evidence="1">Glutamyl-tRNA(Gln) amidotransferase subunit A</fullName>
        <shortName evidence="1">Glu-ADT subunit A</shortName>
        <ecNumber evidence="1">6.3.5.7</ecNumber>
    </recommendedName>
</protein>
<dbReference type="EC" id="6.3.5.7" evidence="1"/>
<dbReference type="EMBL" id="CP000100">
    <property type="protein sequence ID" value="ABB58147.1"/>
    <property type="molecule type" value="Genomic_DNA"/>
</dbReference>
<dbReference type="RefSeq" id="WP_011378324.1">
    <property type="nucleotide sequence ID" value="NZ_JACJTX010000001.1"/>
</dbReference>
<dbReference type="SMR" id="Q31LC2"/>
<dbReference type="STRING" id="1140.Synpcc7942_2117"/>
<dbReference type="PaxDb" id="1140-Synpcc7942_2117"/>
<dbReference type="GeneID" id="72430994"/>
<dbReference type="KEGG" id="syf:Synpcc7942_2117"/>
<dbReference type="eggNOG" id="COG0154">
    <property type="taxonomic scope" value="Bacteria"/>
</dbReference>
<dbReference type="HOGENOM" id="CLU_009600_0_3_3"/>
<dbReference type="OrthoDB" id="9811471at2"/>
<dbReference type="BioCyc" id="MetaCyc:SYNPCC7942_2117-MONOMER"/>
<dbReference type="BioCyc" id="SYNEL:SYNPCC7942_2117-MONOMER"/>
<dbReference type="Proteomes" id="UP000889800">
    <property type="component" value="Chromosome"/>
</dbReference>
<dbReference type="GO" id="GO:0030956">
    <property type="term" value="C:glutamyl-tRNA(Gln) amidotransferase complex"/>
    <property type="evidence" value="ECO:0007669"/>
    <property type="project" value="InterPro"/>
</dbReference>
<dbReference type="GO" id="GO:0005524">
    <property type="term" value="F:ATP binding"/>
    <property type="evidence" value="ECO:0007669"/>
    <property type="project" value="UniProtKB-KW"/>
</dbReference>
<dbReference type="GO" id="GO:0050567">
    <property type="term" value="F:glutaminyl-tRNA synthase (glutamine-hydrolyzing) activity"/>
    <property type="evidence" value="ECO:0007669"/>
    <property type="project" value="UniProtKB-UniRule"/>
</dbReference>
<dbReference type="GO" id="GO:0006412">
    <property type="term" value="P:translation"/>
    <property type="evidence" value="ECO:0007669"/>
    <property type="project" value="UniProtKB-UniRule"/>
</dbReference>
<dbReference type="Gene3D" id="3.90.1300.10">
    <property type="entry name" value="Amidase signature (AS) domain"/>
    <property type="match status" value="1"/>
</dbReference>
<dbReference type="HAMAP" id="MF_00120">
    <property type="entry name" value="GatA"/>
    <property type="match status" value="1"/>
</dbReference>
<dbReference type="InterPro" id="IPR000120">
    <property type="entry name" value="Amidase"/>
</dbReference>
<dbReference type="InterPro" id="IPR020556">
    <property type="entry name" value="Amidase_CS"/>
</dbReference>
<dbReference type="InterPro" id="IPR023631">
    <property type="entry name" value="Amidase_dom"/>
</dbReference>
<dbReference type="InterPro" id="IPR036928">
    <property type="entry name" value="AS_sf"/>
</dbReference>
<dbReference type="InterPro" id="IPR004412">
    <property type="entry name" value="GatA"/>
</dbReference>
<dbReference type="NCBIfam" id="TIGR00132">
    <property type="entry name" value="gatA"/>
    <property type="match status" value="1"/>
</dbReference>
<dbReference type="PANTHER" id="PTHR11895:SF151">
    <property type="entry name" value="GLUTAMYL-TRNA(GLN) AMIDOTRANSFERASE SUBUNIT A"/>
    <property type="match status" value="1"/>
</dbReference>
<dbReference type="PANTHER" id="PTHR11895">
    <property type="entry name" value="TRANSAMIDASE"/>
    <property type="match status" value="1"/>
</dbReference>
<dbReference type="Pfam" id="PF01425">
    <property type="entry name" value="Amidase"/>
    <property type="match status" value="1"/>
</dbReference>
<dbReference type="SUPFAM" id="SSF75304">
    <property type="entry name" value="Amidase signature (AS) enzymes"/>
    <property type="match status" value="1"/>
</dbReference>
<dbReference type="PROSITE" id="PS00571">
    <property type="entry name" value="AMIDASES"/>
    <property type="match status" value="1"/>
</dbReference>
<proteinExistence type="inferred from homology"/>
<name>GATA_SYNE7</name>
<reference key="1">
    <citation type="submission" date="2005-08" db="EMBL/GenBank/DDBJ databases">
        <title>Complete sequence of chromosome 1 of Synechococcus elongatus PCC 7942.</title>
        <authorList>
            <consortium name="US DOE Joint Genome Institute"/>
            <person name="Copeland A."/>
            <person name="Lucas S."/>
            <person name="Lapidus A."/>
            <person name="Barry K."/>
            <person name="Detter J.C."/>
            <person name="Glavina T."/>
            <person name="Hammon N."/>
            <person name="Israni S."/>
            <person name="Pitluck S."/>
            <person name="Schmutz J."/>
            <person name="Larimer F."/>
            <person name="Land M."/>
            <person name="Kyrpides N."/>
            <person name="Lykidis A."/>
            <person name="Golden S."/>
            <person name="Richardson P."/>
        </authorList>
    </citation>
    <scope>NUCLEOTIDE SEQUENCE [LARGE SCALE GENOMIC DNA]</scope>
    <source>
        <strain>ATCC 33912 / PCC 7942 / FACHB-805</strain>
    </source>
</reference>
<feature type="chain" id="PRO_0000241167" description="Glutamyl-tRNA(Gln) amidotransferase subunit A">
    <location>
        <begin position="1"/>
        <end position="479"/>
    </location>
</feature>
<feature type="active site" description="Charge relay system" evidence="1">
    <location>
        <position position="75"/>
    </location>
</feature>
<feature type="active site" description="Charge relay system" evidence="1">
    <location>
        <position position="150"/>
    </location>
</feature>
<feature type="active site" description="Acyl-ester intermediate" evidence="1">
    <location>
        <position position="174"/>
    </location>
</feature>
<organism>
    <name type="scientific">Synechococcus elongatus (strain ATCC 33912 / PCC 7942 / FACHB-805)</name>
    <name type="common">Anacystis nidulans R2</name>
    <dbReference type="NCBI Taxonomy" id="1140"/>
    <lineage>
        <taxon>Bacteria</taxon>
        <taxon>Bacillati</taxon>
        <taxon>Cyanobacteriota</taxon>
        <taxon>Cyanophyceae</taxon>
        <taxon>Synechococcales</taxon>
        <taxon>Synechococcaceae</taxon>
        <taxon>Synechococcus</taxon>
    </lineage>
</organism>
<accession>Q31LC2</accession>
<evidence type="ECO:0000255" key="1">
    <source>
        <dbReference type="HAMAP-Rule" id="MF_00120"/>
    </source>
</evidence>